<name>GMPR_LEIDO</name>
<evidence type="ECO:0000255" key="1">
    <source>
        <dbReference type="HAMAP-Rule" id="MF_03195"/>
    </source>
</evidence>
<evidence type="ECO:0000269" key="2">
    <source>
    </source>
</evidence>
<evidence type="ECO:0000303" key="3">
    <source>
    </source>
</evidence>
<gene>
    <name evidence="1" type="primary">GMPR</name>
    <name type="ORF">LDBPK_170870</name>
</gene>
<proteinExistence type="evidence at protein level"/>
<accession>E9BDA8</accession>
<sequence>MAALGSLPTLPEGLTYDDVLLIPQRSPVRSRKAVNTSTRLSRNIHLKIPIVASNMDTVCEDKTAVTMAREGGIGILHRFCSIEEQCAMVRKVKRAQSFLIEDPRMILPSATKAEALEELNWSGRKGGVSCLMVVDDFTSRRLCGVLSKSDLIFATDSALVETLMTPVSRTVVSTNTAITLEEAREVMRTKRTSNIPLLGPKGELLYLITQSDILKLTGNRNATLDSRGRLIVGAAIGVKKEDHKRAAALVDAGADVLVVDIAHGHSDLCIDMVKALKVNPLTNKVDIIAGNIATAEAAQDLIDAGADGLKIGVGPGSICITRLVAGSGVPQLSAVMDCARVAKKHGVPCIADGGVKTAGDICKAIAAGADTVMLGNMLAGTDEAPGRVLVKDGKKVKIIRGMAGFGANISKAEREKRLDEDVFNDLVPEGVEGSVPCKGPLAPILKQLVGGLRSGISYCGSHSIADMQQRARFVRMSGAGLRESGSHDISKL</sequence>
<feature type="chain" id="PRO_0000433992" description="GMP reductase">
    <location>
        <begin position="1"/>
        <end position="492"/>
    </location>
</feature>
<feature type="domain" description="CBS 1" evidence="1">
    <location>
        <begin position="99"/>
        <end position="162"/>
    </location>
</feature>
<feature type="domain" description="CBS 2" evidence="1">
    <location>
        <begin position="164"/>
        <end position="223"/>
    </location>
</feature>
<feature type="short sequence motif" description="Microbody targeting signal" evidence="1">
    <location>
        <begin position="490"/>
        <end position="492"/>
    </location>
</feature>
<feature type="active site" description="Thioimidate intermediate" evidence="1">
    <location>
        <position position="319"/>
    </location>
</feature>
<feature type="active site" description="Proton donor/acceptor" evidence="1">
    <location>
        <position position="321"/>
    </location>
</feature>
<feature type="binding site" evidence="1">
    <location>
        <begin position="30"/>
        <end position="31"/>
    </location>
    <ligand>
        <name>NADP(+)</name>
        <dbReference type="ChEBI" id="CHEBI:58349"/>
        <note>ligand shared between two neighboring subunits</note>
    </ligand>
</feature>
<feature type="binding site" description="in other chain" evidence="1">
    <location>
        <position position="78"/>
    </location>
    <ligand>
        <name>NADP(+)</name>
        <dbReference type="ChEBI" id="CHEBI:58349"/>
        <note>ligand shared between two neighboring subunits</note>
    </ligand>
</feature>
<feature type="binding site" description="in other chain" evidence="1">
    <location>
        <begin position="260"/>
        <end position="262"/>
    </location>
    <ligand>
        <name>NADP(+)</name>
        <dbReference type="ChEBI" id="CHEBI:58349"/>
        <note>ligand shared between two neighboring subunits</note>
    </ligand>
</feature>
<feature type="binding site" description="in other chain" evidence="1">
    <location>
        <begin position="313"/>
        <end position="314"/>
    </location>
    <ligand>
        <name>NADP(+)</name>
        <dbReference type="ChEBI" id="CHEBI:58349"/>
        <note>ligand shared between two neighboring subunits</note>
    </ligand>
</feature>
<feature type="binding site" evidence="1">
    <location>
        <position position="314"/>
    </location>
    <ligand>
        <name>K(+)</name>
        <dbReference type="ChEBI" id="CHEBI:29103"/>
    </ligand>
</feature>
<feature type="binding site" evidence="1">
    <location>
        <position position="316"/>
    </location>
    <ligand>
        <name>K(+)</name>
        <dbReference type="ChEBI" id="CHEBI:29103"/>
    </ligand>
</feature>
<feature type="binding site" evidence="1">
    <location>
        <position position="319"/>
    </location>
    <ligand>
        <name>K(+)</name>
        <dbReference type="ChEBI" id="CHEBI:29103"/>
    </ligand>
</feature>
<feature type="binding site" evidence="1">
    <location>
        <position position="322"/>
    </location>
    <ligand>
        <name>K(+)</name>
        <dbReference type="ChEBI" id="CHEBI:29103"/>
    </ligand>
</feature>
<feature type="binding site" evidence="1">
    <location>
        <begin position="352"/>
        <end position="354"/>
    </location>
    <ligand>
        <name>GMP</name>
        <dbReference type="ChEBI" id="CHEBI:58115"/>
    </ligand>
</feature>
<feature type="binding site" evidence="1">
    <location>
        <begin position="375"/>
        <end position="376"/>
    </location>
    <ligand>
        <name>GMP</name>
        <dbReference type="ChEBI" id="CHEBI:58115"/>
    </ligand>
</feature>
<feature type="binding site" evidence="1">
    <location>
        <begin position="401"/>
        <end position="403"/>
    </location>
    <ligand>
        <name>GMP</name>
        <dbReference type="ChEBI" id="CHEBI:58115"/>
    </ligand>
</feature>
<feature type="binding site" description="in other chain" evidence="1">
    <location>
        <position position="402"/>
    </location>
    <ligand>
        <name>NADP(+)</name>
        <dbReference type="ChEBI" id="CHEBI:58349"/>
        <note>ligand shared between two neighboring subunits</note>
    </ligand>
</feature>
<feature type="binding site" evidence="1">
    <location>
        <begin position="454"/>
        <end position="457"/>
    </location>
    <ligand>
        <name>NADP(+)</name>
        <dbReference type="ChEBI" id="CHEBI:58349"/>
        <note>ligand shared between two neighboring subunits</note>
    </ligand>
</feature>
<keyword id="KW-0129">CBS domain</keyword>
<keyword id="KW-0327">Glycosome</keyword>
<keyword id="KW-0332">GMP biosynthesis</keyword>
<keyword id="KW-0479">Metal-binding</keyword>
<keyword id="KW-0520">NAD</keyword>
<keyword id="KW-0521">NADP</keyword>
<keyword id="KW-0560">Oxidoreductase</keyword>
<keyword id="KW-0576">Peroxisome</keyword>
<keyword id="KW-0630">Potassium</keyword>
<keyword id="KW-0658">Purine biosynthesis</keyword>
<keyword id="KW-0659">Purine metabolism</keyword>
<keyword id="KW-0677">Repeat</keyword>
<comment type="function">
    <text evidence="1 2">Catalyzes the irreversible NADPH-dependent deamination of GMP to IMP (PubMed:7159467). It functions in the conversion of nucleobase, nucleoside and nucleotide derivatives of G to A nucleotides, and in maintaining the intracellular balance of A and G nucleotides (By similarity).</text>
</comment>
<comment type="catalytic activity">
    <reaction evidence="1 2">
        <text>IMP + NH4(+) + NADP(+) = GMP + NADPH + 2 H(+)</text>
        <dbReference type="Rhea" id="RHEA:17185"/>
        <dbReference type="ChEBI" id="CHEBI:15378"/>
        <dbReference type="ChEBI" id="CHEBI:28938"/>
        <dbReference type="ChEBI" id="CHEBI:57783"/>
        <dbReference type="ChEBI" id="CHEBI:58053"/>
        <dbReference type="ChEBI" id="CHEBI:58115"/>
        <dbReference type="ChEBI" id="CHEBI:58349"/>
        <dbReference type="EC" id="1.7.1.7"/>
    </reaction>
</comment>
<comment type="activity regulation">
    <text evidence="2">Activated by GTP and inhibited by XMP and the IMP analogs allopurinol nucleotide and thiopurinol nucleotide.</text>
</comment>
<comment type="biophysicochemical properties">
    <kinetics>
        <KM evidence="2">21 uM for GMP</KM>
    </kinetics>
</comment>
<comment type="subunit">
    <text evidence="1">Homotetramer.</text>
</comment>
<comment type="subcellular location">
    <subcellularLocation>
        <location evidence="1">Glycosome</location>
    </subcellularLocation>
</comment>
<comment type="similarity">
    <text evidence="1">Belongs to the IMPDH/GMPR family. GuaC type 1 subfamily.</text>
</comment>
<dbReference type="EC" id="1.7.1.7" evidence="1 2"/>
<dbReference type="EMBL" id="FR799604">
    <property type="protein sequence ID" value="CBZ33234.1"/>
    <property type="molecule type" value="Genomic_DNA"/>
</dbReference>
<dbReference type="RefSeq" id="XP_003859941.1">
    <property type="nucleotide sequence ID" value="XM_003859893.1"/>
</dbReference>
<dbReference type="SMR" id="E9BDA8"/>
<dbReference type="EnsemblProtists" id="CBZ33234">
    <property type="protein sequence ID" value="CBZ33234"/>
    <property type="gene ID" value="LDBPK_170870"/>
</dbReference>
<dbReference type="GeneID" id="13393356"/>
<dbReference type="KEGG" id="ldo:LDBPK_170870"/>
<dbReference type="VEuPathDB" id="TriTrypDB:LdBPK_170870.1"/>
<dbReference type="OMA" id="PGSHCTT"/>
<dbReference type="OrthoDB" id="418595at2759"/>
<dbReference type="PhylomeDB" id="E9BDA8"/>
<dbReference type="SABIO-RK" id="E9BDA8"/>
<dbReference type="Proteomes" id="UP000008980">
    <property type="component" value="Chromosome 17"/>
</dbReference>
<dbReference type="GO" id="GO:0020015">
    <property type="term" value="C:glycosome"/>
    <property type="evidence" value="ECO:0007669"/>
    <property type="project" value="UniProtKB-SubCell"/>
</dbReference>
<dbReference type="GO" id="GO:1902560">
    <property type="term" value="C:GMP reductase complex"/>
    <property type="evidence" value="ECO:0007669"/>
    <property type="project" value="InterPro"/>
</dbReference>
<dbReference type="GO" id="GO:0003920">
    <property type="term" value="F:GMP reductase activity"/>
    <property type="evidence" value="ECO:0007669"/>
    <property type="project" value="UniProtKB-UniRule"/>
</dbReference>
<dbReference type="GO" id="GO:0003938">
    <property type="term" value="F:IMP dehydrogenase activity"/>
    <property type="evidence" value="ECO:0007669"/>
    <property type="project" value="InterPro"/>
</dbReference>
<dbReference type="GO" id="GO:0046872">
    <property type="term" value="F:metal ion binding"/>
    <property type="evidence" value="ECO:0007669"/>
    <property type="project" value="UniProtKB-KW"/>
</dbReference>
<dbReference type="GO" id="GO:0006177">
    <property type="term" value="P:GMP biosynthetic process"/>
    <property type="evidence" value="ECO:0007669"/>
    <property type="project" value="UniProtKB-KW"/>
</dbReference>
<dbReference type="GO" id="GO:0006183">
    <property type="term" value="P:GTP biosynthetic process"/>
    <property type="evidence" value="ECO:0007669"/>
    <property type="project" value="TreeGrafter"/>
</dbReference>
<dbReference type="GO" id="GO:0006144">
    <property type="term" value="P:purine nucleobase metabolic process"/>
    <property type="evidence" value="ECO:0007669"/>
    <property type="project" value="UniProtKB-KW"/>
</dbReference>
<dbReference type="CDD" id="cd04601">
    <property type="entry name" value="CBS_pair_IMPDH"/>
    <property type="match status" value="1"/>
</dbReference>
<dbReference type="CDD" id="cd00381">
    <property type="entry name" value="IMPDH"/>
    <property type="match status" value="1"/>
</dbReference>
<dbReference type="FunFam" id="3.20.20.70:FF:000003">
    <property type="entry name" value="GMP reductase"/>
    <property type="match status" value="1"/>
</dbReference>
<dbReference type="Gene3D" id="3.20.20.70">
    <property type="entry name" value="Aldolase class I"/>
    <property type="match status" value="1"/>
</dbReference>
<dbReference type="HAMAP" id="MF_00596">
    <property type="entry name" value="GMP_reduct_type1"/>
    <property type="match status" value="1"/>
</dbReference>
<dbReference type="InterPro" id="IPR013785">
    <property type="entry name" value="Aldolase_TIM"/>
</dbReference>
<dbReference type="InterPro" id="IPR000644">
    <property type="entry name" value="CBS_dom"/>
</dbReference>
<dbReference type="InterPro" id="IPR046342">
    <property type="entry name" value="CBS_dom_sf"/>
</dbReference>
<dbReference type="InterPro" id="IPR005993">
    <property type="entry name" value="GMPR"/>
</dbReference>
<dbReference type="InterPro" id="IPR005990">
    <property type="entry name" value="IMP_DH"/>
</dbReference>
<dbReference type="InterPro" id="IPR015875">
    <property type="entry name" value="IMP_DH/GMP_Rdtase_CS"/>
</dbReference>
<dbReference type="InterPro" id="IPR001093">
    <property type="entry name" value="IMP_DH_GMPRt"/>
</dbReference>
<dbReference type="NCBIfam" id="TIGR01302">
    <property type="entry name" value="IMP_dehydrog"/>
    <property type="match status" value="1"/>
</dbReference>
<dbReference type="PANTHER" id="PTHR11911:SF122">
    <property type="entry name" value="GMP REDUCTASE"/>
    <property type="match status" value="1"/>
</dbReference>
<dbReference type="PANTHER" id="PTHR11911">
    <property type="entry name" value="INOSINE-5-MONOPHOSPHATE DEHYDROGENASE RELATED"/>
    <property type="match status" value="1"/>
</dbReference>
<dbReference type="Pfam" id="PF00571">
    <property type="entry name" value="CBS"/>
    <property type="match status" value="2"/>
</dbReference>
<dbReference type="Pfam" id="PF00478">
    <property type="entry name" value="IMPDH"/>
    <property type="match status" value="1"/>
</dbReference>
<dbReference type="PIRSF" id="PIRSF000130">
    <property type="entry name" value="IMPDH"/>
    <property type="match status" value="1"/>
</dbReference>
<dbReference type="SMART" id="SM00116">
    <property type="entry name" value="CBS"/>
    <property type="match status" value="2"/>
</dbReference>
<dbReference type="SMART" id="SM01240">
    <property type="entry name" value="IMPDH"/>
    <property type="match status" value="1"/>
</dbReference>
<dbReference type="SUPFAM" id="SSF54631">
    <property type="entry name" value="CBS-domain pair"/>
    <property type="match status" value="1"/>
</dbReference>
<dbReference type="SUPFAM" id="SSF51412">
    <property type="entry name" value="Inosine monophosphate dehydrogenase (IMPDH)"/>
    <property type="match status" value="1"/>
</dbReference>
<dbReference type="PROSITE" id="PS51371">
    <property type="entry name" value="CBS"/>
    <property type="match status" value="2"/>
</dbReference>
<dbReference type="PROSITE" id="PS00487">
    <property type="entry name" value="IMP_DH_GMP_RED"/>
    <property type="match status" value="1"/>
</dbReference>
<protein>
    <recommendedName>
        <fullName evidence="1 3">GMP reductase</fullName>
        <shortName evidence="1">GMPR</shortName>
        <ecNumber evidence="1 2">1.7.1.7</ecNumber>
    </recommendedName>
    <alternativeName>
        <fullName evidence="1 3">Guanosine 5'-monophosphate oxidoreductase</fullName>
        <shortName evidence="1">Guanosine monophosphate reductase</shortName>
    </alternativeName>
</protein>
<reference key="1">
    <citation type="journal article" date="2011" name="Genome Res.">
        <title>Whole genome sequencing of multiple Leishmania donovani clinical isolates provides insights into population structure and mechanisms of drug resistance.</title>
        <authorList>
            <person name="Downing T."/>
            <person name="Imamura H."/>
            <person name="Decuypere S."/>
            <person name="Clark T.G."/>
            <person name="Coombs G.H."/>
            <person name="Cotton J.A."/>
            <person name="Hilley J.D."/>
            <person name="de Doncker S."/>
            <person name="Maes I."/>
            <person name="Mottram J.C."/>
            <person name="Quail M.A."/>
            <person name="Rijal S."/>
            <person name="Sanders M."/>
            <person name="Schoenian G."/>
            <person name="Stark O."/>
            <person name="Sundar S."/>
            <person name="Vanaerschot M."/>
            <person name="Hertz-Fowler C."/>
            <person name="Dujardin J.-C."/>
            <person name="Berriman M."/>
        </authorList>
    </citation>
    <scope>NUCLEOTIDE SEQUENCE [LARGE SCALE GENOMIC DNA]</scope>
    <source>
        <strain>BPK282A1</strain>
    </source>
</reference>
<reference key="2">
    <citation type="journal article" date="1982" name="Biochem. Pharmacol.">
        <title>Guanosine 5'-monophosphate reductase from Leishmania donovani. A possible chemotherapeutic target.</title>
        <authorList>
            <person name="Spector T."/>
            <person name="Jones T.E."/>
        </authorList>
    </citation>
    <scope>FUNCTION</scope>
    <scope>CATALYTIC ACTIVITY</scope>
    <scope>BIOPHYSICOCHEMICAL PROPERTIES</scope>
    <scope>ACTIVITY REGULATION</scope>
</reference>
<organism>
    <name type="scientific">Leishmania donovani</name>
    <dbReference type="NCBI Taxonomy" id="5661"/>
    <lineage>
        <taxon>Eukaryota</taxon>
        <taxon>Discoba</taxon>
        <taxon>Euglenozoa</taxon>
        <taxon>Kinetoplastea</taxon>
        <taxon>Metakinetoplastina</taxon>
        <taxon>Trypanosomatida</taxon>
        <taxon>Trypanosomatidae</taxon>
        <taxon>Leishmaniinae</taxon>
        <taxon>Leishmania</taxon>
    </lineage>
</organism>